<organism>
    <name type="scientific">Synechocystis sp. (strain ATCC 27184 / PCC 6803 / Kazusa)</name>
    <dbReference type="NCBI Taxonomy" id="1111708"/>
    <lineage>
        <taxon>Bacteria</taxon>
        <taxon>Bacillati</taxon>
        <taxon>Cyanobacteriota</taxon>
        <taxon>Cyanophyceae</taxon>
        <taxon>Synechococcales</taxon>
        <taxon>Merismopediaceae</taxon>
        <taxon>Synechocystis</taxon>
    </lineage>
</organism>
<accession>P74163</accession>
<gene>
    <name evidence="1" type="primary">pyrB</name>
    <name type="ordered locus">slr1476</name>
</gene>
<protein>
    <recommendedName>
        <fullName evidence="1">Aspartate carbamoyltransferase catalytic subunit</fullName>
        <ecNumber evidence="1">2.1.3.2</ecNumber>
    </recommendedName>
    <alternativeName>
        <fullName evidence="1">Aspartate transcarbamylase</fullName>
        <shortName evidence="1">ATCase</shortName>
    </alternativeName>
</protein>
<feature type="chain" id="PRO_0000113218" description="Aspartate carbamoyltransferase catalytic subunit">
    <location>
        <begin position="1"/>
        <end position="331"/>
    </location>
</feature>
<feature type="binding site" evidence="1">
    <location>
        <position position="62"/>
    </location>
    <ligand>
        <name>carbamoyl phosphate</name>
        <dbReference type="ChEBI" id="CHEBI:58228"/>
    </ligand>
</feature>
<feature type="binding site" evidence="1">
    <location>
        <position position="63"/>
    </location>
    <ligand>
        <name>carbamoyl phosphate</name>
        <dbReference type="ChEBI" id="CHEBI:58228"/>
    </ligand>
</feature>
<feature type="binding site" evidence="1">
    <location>
        <position position="90"/>
    </location>
    <ligand>
        <name>L-aspartate</name>
        <dbReference type="ChEBI" id="CHEBI:29991"/>
    </ligand>
</feature>
<feature type="binding site" evidence="1">
    <location>
        <position position="112"/>
    </location>
    <ligand>
        <name>carbamoyl phosphate</name>
        <dbReference type="ChEBI" id="CHEBI:58228"/>
    </ligand>
</feature>
<feature type="binding site" evidence="1">
    <location>
        <position position="145"/>
    </location>
    <ligand>
        <name>carbamoyl phosphate</name>
        <dbReference type="ChEBI" id="CHEBI:58228"/>
    </ligand>
</feature>
<feature type="binding site" evidence="1">
    <location>
        <position position="148"/>
    </location>
    <ligand>
        <name>carbamoyl phosphate</name>
        <dbReference type="ChEBI" id="CHEBI:58228"/>
    </ligand>
</feature>
<feature type="binding site" evidence="1">
    <location>
        <position position="185"/>
    </location>
    <ligand>
        <name>L-aspartate</name>
        <dbReference type="ChEBI" id="CHEBI:29991"/>
    </ligand>
</feature>
<feature type="binding site" evidence="1">
    <location>
        <position position="246"/>
    </location>
    <ligand>
        <name>L-aspartate</name>
        <dbReference type="ChEBI" id="CHEBI:29991"/>
    </ligand>
</feature>
<feature type="binding site" evidence="1">
    <location>
        <position position="287"/>
    </location>
    <ligand>
        <name>carbamoyl phosphate</name>
        <dbReference type="ChEBI" id="CHEBI:58228"/>
    </ligand>
</feature>
<feature type="binding site" evidence="1">
    <location>
        <position position="288"/>
    </location>
    <ligand>
        <name>carbamoyl phosphate</name>
        <dbReference type="ChEBI" id="CHEBI:58228"/>
    </ligand>
</feature>
<proteinExistence type="inferred from homology"/>
<dbReference type="EC" id="2.1.3.2" evidence="1"/>
<dbReference type="EMBL" id="BA000022">
    <property type="protein sequence ID" value="BAA18252.1"/>
    <property type="molecule type" value="Genomic_DNA"/>
</dbReference>
<dbReference type="PIR" id="S75691">
    <property type="entry name" value="S75691"/>
</dbReference>
<dbReference type="SMR" id="P74163"/>
<dbReference type="FunCoup" id="P74163">
    <property type="interactions" value="461"/>
</dbReference>
<dbReference type="IntAct" id="P74163">
    <property type="interactions" value="1"/>
</dbReference>
<dbReference type="STRING" id="1148.gene:10499127"/>
<dbReference type="PaxDb" id="1148-1653337"/>
<dbReference type="EnsemblBacteria" id="BAA18252">
    <property type="protein sequence ID" value="BAA18252"/>
    <property type="gene ID" value="BAA18252"/>
</dbReference>
<dbReference type="KEGG" id="syn:slr1476"/>
<dbReference type="eggNOG" id="COG0540">
    <property type="taxonomic scope" value="Bacteria"/>
</dbReference>
<dbReference type="InParanoid" id="P74163"/>
<dbReference type="PhylomeDB" id="P74163"/>
<dbReference type="UniPathway" id="UPA00070">
    <property type="reaction ID" value="UER00116"/>
</dbReference>
<dbReference type="Proteomes" id="UP000001425">
    <property type="component" value="Chromosome"/>
</dbReference>
<dbReference type="GO" id="GO:0016597">
    <property type="term" value="F:amino acid binding"/>
    <property type="evidence" value="ECO:0007669"/>
    <property type="project" value="InterPro"/>
</dbReference>
<dbReference type="GO" id="GO:0004070">
    <property type="term" value="F:aspartate carbamoyltransferase activity"/>
    <property type="evidence" value="ECO:0007669"/>
    <property type="project" value="UniProtKB-UniRule"/>
</dbReference>
<dbReference type="GO" id="GO:0006207">
    <property type="term" value="P:'de novo' pyrimidine nucleobase biosynthetic process"/>
    <property type="evidence" value="ECO:0007669"/>
    <property type="project" value="InterPro"/>
</dbReference>
<dbReference type="GO" id="GO:0044205">
    <property type="term" value="P:'de novo' UMP biosynthetic process"/>
    <property type="evidence" value="ECO:0007669"/>
    <property type="project" value="UniProtKB-UniRule"/>
</dbReference>
<dbReference type="GO" id="GO:0006520">
    <property type="term" value="P:amino acid metabolic process"/>
    <property type="evidence" value="ECO:0007669"/>
    <property type="project" value="InterPro"/>
</dbReference>
<dbReference type="FunFam" id="3.40.50.1370:FF:000007">
    <property type="entry name" value="Aspartate carbamoyltransferase"/>
    <property type="match status" value="1"/>
</dbReference>
<dbReference type="Gene3D" id="3.40.50.1370">
    <property type="entry name" value="Aspartate/ornithine carbamoyltransferase"/>
    <property type="match status" value="2"/>
</dbReference>
<dbReference type="HAMAP" id="MF_00001">
    <property type="entry name" value="Asp_carb_tr"/>
    <property type="match status" value="1"/>
</dbReference>
<dbReference type="InterPro" id="IPR006132">
    <property type="entry name" value="Asp/Orn_carbamoyltranf_P-bd"/>
</dbReference>
<dbReference type="InterPro" id="IPR006130">
    <property type="entry name" value="Asp/Orn_carbamoylTrfase"/>
</dbReference>
<dbReference type="InterPro" id="IPR036901">
    <property type="entry name" value="Asp/Orn_carbamoylTrfase_sf"/>
</dbReference>
<dbReference type="InterPro" id="IPR002082">
    <property type="entry name" value="Asp_carbamoyltransf"/>
</dbReference>
<dbReference type="InterPro" id="IPR006131">
    <property type="entry name" value="Asp_carbamoyltransf_Asp/Orn-bd"/>
</dbReference>
<dbReference type="NCBIfam" id="TIGR00670">
    <property type="entry name" value="asp_carb_tr"/>
    <property type="match status" value="1"/>
</dbReference>
<dbReference type="NCBIfam" id="NF002032">
    <property type="entry name" value="PRK00856.1"/>
    <property type="match status" value="1"/>
</dbReference>
<dbReference type="PANTHER" id="PTHR45753:SF6">
    <property type="entry name" value="ASPARTATE CARBAMOYLTRANSFERASE"/>
    <property type="match status" value="1"/>
</dbReference>
<dbReference type="PANTHER" id="PTHR45753">
    <property type="entry name" value="ORNITHINE CARBAMOYLTRANSFERASE, MITOCHONDRIAL"/>
    <property type="match status" value="1"/>
</dbReference>
<dbReference type="Pfam" id="PF00185">
    <property type="entry name" value="OTCace"/>
    <property type="match status" value="1"/>
</dbReference>
<dbReference type="Pfam" id="PF02729">
    <property type="entry name" value="OTCace_N"/>
    <property type="match status" value="1"/>
</dbReference>
<dbReference type="PRINTS" id="PR00100">
    <property type="entry name" value="AOTCASE"/>
</dbReference>
<dbReference type="PRINTS" id="PR00101">
    <property type="entry name" value="ATCASE"/>
</dbReference>
<dbReference type="SUPFAM" id="SSF53671">
    <property type="entry name" value="Aspartate/ornithine carbamoyltransferase"/>
    <property type="match status" value="1"/>
</dbReference>
<dbReference type="PROSITE" id="PS00097">
    <property type="entry name" value="CARBAMOYLTRANSFERASE"/>
    <property type="match status" value="1"/>
</dbReference>
<name>PYRB_SYNY3</name>
<reference key="1">
    <citation type="journal article" date="1996" name="DNA Res.">
        <title>Sequence analysis of the genome of the unicellular cyanobacterium Synechocystis sp. strain PCC6803. II. Sequence determination of the entire genome and assignment of potential protein-coding regions.</title>
        <authorList>
            <person name="Kaneko T."/>
            <person name="Sato S."/>
            <person name="Kotani H."/>
            <person name="Tanaka A."/>
            <person name="Asamizu E."/>
            <person name="Nakamura Y."/>
            <person name="Miyajima N."/>
            <person name="Hirosawa M."/>
            <person name="Sugiura M."/>
            <person name="Sasamoto S."/>
            <person name="Kimura T."/>
            <person name="Hosouchi T."/>
            <person name="Matsuno A."/>
            <person name="Muraki A."/>
            <person name="Nakazaki N."/>
            <person name="Naruo K."/>
            <person name="Okumura S."/>
            <person name="Shimpo S."/>
            <person name="Takeuchi C."/>
            <person name="Wada T."/>
            <person name="Watanabe A."/>
            <person name="Yamada M."/>
            <person name="Yasuda M."/>
            <person name="Tabata S."/>
        </authorList>
    </citation>
    <scope>NUCLEOTIDE SEQUENCE [LARGE SCALE GENOMIC DNA]</scope>
    <source>
        <strain>ATCC 27184 / PCC 6803 / Kazusa</strain>
    </source>
</reference>
<evidence type="ECO:0000255" key="1">
    <source>
        <dbReference type="HAMAP-Rule" id="MF_00001"/>
    </source>
</evidence>
<evidence type="ECO:0000305" key="2"/>
<keyword id="KW-0665">Pyrimidine biosynthesis</keyword>
<keyword id="KW-1185">Reference proteome</keyword>
<keyword id="KW-0808">Transferase</keyword>
<comment type="function">
    <text evidence="1">Catalyzes the condensation of carbamoyl phosphate and aspartate to form carbamoyl aspartate and inorganic phosphate, the committed step in the de novo pyrimidine nucleotide biosynthesis pathway.</text>
</comment>
<comment type="catalytic activity">
    <reaction evidence="1">
        <text>carbamoyl phosphate + L-aspartate = N-carbamoyl-L-aspartate + phosphate + H(+)</text>
        <dbReference type="Rhea" id="RHEA:20013"/>
        <dbReference type="ChEBI" id="CHEBI:15378"/>
        <dbReference type="ChEBI" id="CHEBI:29991"/>
        <dbReference type="ChEBI" id="CHEBI:32814"/>
        <dbReference type="ChEBI" id="CHEBI:43474"/>
        <dbReference type="ChEBI" id="CHEBI:58228"/>
        <dbReference type="EC" id="2.1.3.2"/>
    </reaction>
</comment>
<comment type="pathway">
    <text evidence="1">Pyrimidine metabolism; UMP biosynthesis via de novo pathway; (S)-dihydroorotate from bicarbonate: step 2/3.</text>
</comment>
<comment type="subunit">
    <text evidence="1">Heterododecamer (2C3:3R2) of six catalytic PyrB chains organized as two trimers (C3), and six regulatory PyrI chains organized as three dimers (R2).</text>
</comment>
<comment type="similarity">
    <text evidence="1 2">Belongs to the aspartate/ornithine carbamoyltransferase superfamily. ATCase family.</text>
</comment>
<sequence length="331" mass="36394">MTMVASWTRNHILDLTDWRGEELDIVLQTATTFQQVLSGQTKKVPALQGQVVTNLFFEPSTRTRSSFELAAKRLSADVMNFSPGTSSLTKGETILDTAKTYLAMGSDIFVIRHQQAGVPHFIASQMDRLQTGVKVLNAGDGQHEHPSQGLLDLFTICSQFAPDNPAIQCLQGKKIAVVGDILHSRVARSNLWSLTTAGADVHLAGPPTLLPKEFQQLTLAPGSGKLHCHWQLQPALEGADIVMTLRLQKERMTAHLLPSLREYHHYFGITHDRLKVCQPGVKVLHPGPVNRGVEISSELMDDPDISLIQDQVTSGVAIRMALLYLLGTVQE</sequence>